<name>COX2_PNECA</name>
<dbReference type="EC" id="7.1.1.9"/>
<dbReference type="PIR" id="S16283">
    <property type="entry name" value="OBUNMP"/>
</dbReference>
<dbReference type="RefSeq" id="YP_009186396.1">
    <property type="nucleotide sequence ID" value="NC_013660.2"/>
</dbReference>
<dbReference type="SMR" id="P29163"/>
<dbReference type="GeneID" id="26373797"/>
<dbReference type="GO" id="GO:0005743">
    <property type="term" value="C:mitochondrial inner membrane"/>
    <property type="evidence" value="ECO:0007669"/>
    <property type="project" value="UniProtKB-SubCell"/>
</dbReference>
<dbReference type="GO" id="GO:0005507">
    <property type="term" value="F:copper ion binding"/>
    <property type="evidence" value="ECO:0007669"/>
    <property type="project" value="InterPro"/>
</dbReference>
<dbReference type="GO" id="GO:0004129">
    <property type="term" value="F:cytochrome-c oxidase activity"/>
    <property type="evidence" value="ECO:0007669"/>
    <property type="project" value="UniProtKB-EC"/>
</dbReference>
<dbReference type="GO" id="GO:0042773">
    <property type="term" value="P:ATP synthesis coupled electron transport"/>
    <property type="evidence" value="ECO:0007669"/>
    <property type="project" value="TreeGrafter"/>
</dbReference>
<dbReference type="CDD" id="cd13912">
    <property type="entry name" value="CcO_II_C"/>
    <property type="match status" value="1"/>
</dbReference>
<dbReference type="FunFam" id="1.10.287.90:FF:000004">
    <property type="entry name" value="Cytochrome c oxidase subunit 2"/>
    <property type="match status" value="1"/>
</dbReference>
<dbReference type="FunFam" id="2.60.40.420:FF:000001">
    <property type="entry name" value="Cytochrome c oxidase subunit 2"/>
    <property type="match status" value="1"/>
</dbReference>
<dbReference type="Gene3D" id="1.10.287.90">
    <property type="match status" value="1"/>
</dbReference>
<dbReference type="Gene3D" id="2.60.40.420">
    <property type="entry name" value="Cupredoxins - blue copper proteins"/>
    <property type="match status" value="1"/>
</dbReference>
<dbReference type="InterPro" id="IPR045187">
    <property type="entry name" value="CcO_II"/>
</dbReference>
<dbReference type="InterPro" id="IPR002429">
    <property type="entry name" value="CcO_II-like_C"/>
</dbReference>
<dbReference type="InterPro" id="IPR034210">
    <property type="entry name" value="CcO_II_C"/>
</dbReference>
<dbReference type="InterPro" id="IPR001505">
    <property type="entry name" value="Copper_CuA"/>
</dbReference>
<dbReference type="InterPro" id="IPR008972">
    <property type="entry name" value="Cupredoxin"/>
</dbReference>
<dbReference type="InterPro" id="IPR014222">
    <property type="entry name" value="Cyt_c_oxidase_su2"/>
</dbReference>
<dbReference type="InterPro" id="IPR011759">
    <property type="entry name" value="Cyt_c_oxidase_su2_TM_dom"/>
</dbReference>
<dbReference type="InterPro" id="IPR036257">
    <property type="entry name" value="Cyt_c_oxidase_su2_TM_sf"/>
</dbReference>
<dbReference type="NCBIfam" id="TIGR02866">
    <property type="entry name" value="CoxB"/>
    <property type="match status" value="1"/>
</dbReference>
<dbReference type="PANTHER" id="PTHR22888:SF9">
    <property type="entry name" value="CYTOCHROME C OXIDASE SUBUNIT 2"/>
    <property type="match status" value="1"/>
</dbReference>
<dbReference type="PANTHER" id="PTHR22888">
    <property type="entry name" value="CYTOCHROME C OXIDASE, SUBUNIT II"/>
    <property type="match status" value="1"/>
</dbReference>
<dbReference type="Pfam" id="PF00116">
    <property type="entry name" value="COX2"/>
    <property type="match status" value="1"/>
</dbReference>
<dbReference type="Pfam" id="PF02790">
    <property type="entry name" value="COX2_TM"/>
    <property type="match status" value="1"/>
</dbReference>
<dbReference type="PRINTS" id="PR01166">
    <property type="entry name" value="CYCOXIDASEII"/>
</dbReference>
<dbReference type="SUPFAM" id="SSF49503">
    <property type="entry name" value="Cupredoxins"/>
    <property type="match status" value="1"/>
</dbReference>
<dbReference type="SUPFAM" id="SSF81464">
    <property type="entry name" value="Cytochrome c oxidase subunit II-like, transmembrane region"/>
    <property type="match status" value="1"/>
</dbReference>
<dbReference type="PROSITE" id="PS00078">
    <property type="entry name" value="COX2"/>
    <property type="match status" value="1"/>
</dbReference>
<dbReference type="PROSITE" id="PS50857">
    <property type="entry name" value="COX2_CUA"/>
    <property type="match status" value="1"/>
</dbReference>
<dbReference type="PROSITE" id="PS50999">
    <property type="entry name" value="COX2_TM"/>
    <property type="match status" value="1"/>
</dbReference>
<accession>P29163</accession>
<protein>
    <recommendedName>
        <fullName>Cytochrome c oxidase subunit 2</fullName>
        <ecNumber>7.1.1.9</ecNumber>
    </recommendedName>
    <alternativeName>
        <fullName>Cytochrome c oxidase polypeptide II</fullName>
    </alternativeName>
</protein>
<reference key="1">
    <citation type="journal article" date="1991" name="Mol. Microbiol.">
        <title>Mitochondrial gene sequences show fungal homology for Pneumocystis carinii.</title>
        <authorList>
            <person name="Pixley F.J."/>
            <person name="Wakefield A.E."/>
            <person name="Banerji S."/>
            <person name="Hopkin J.M."/>
        </authorList>
    </citation>
    <scope>NUCLEOTIDE SEQUENCE</scope>
</reference>
<comment type="function">
    <text evidence="1">Component of the cytochrome c oxidase, the last enzyme in the mitochondrial electron transport chain which drives oxidative phosphorylation. The respiratory chain contains 3 multisubunit complexes succinate dehydrogenase (complex II, CII), ubiquinol-cytochrome c oxidoreductase (cytochrome b-c1 complex, complex III, CIII) and cytochrome c oxidase (complex IV, CIV), that cooperate to transfer electrons derived from NADH and succinate to molecular oxygen, creating an electrochemical gradient over the inner membrane that drives transmembrane transport and the ATP synthase. Cytochrome c oxidase is the component of the respiratory chain that catalyzes the reduction of oxygen to water. Electrons originating from reduced cytochrome c in the intermembrane space (IMS) are transferred via the dinuclear copper A center (CU(A)) of subunit 2 and heme A of subunit 1 to the active site in subunit 1, a binuclear center (BNC) formed by heme A3 and copper B (CU(B)). The BNC reduces molecular oxygen to 2 water molecules using 4 electrons from cytochrome c in the IMS and 4 protons from the mitochondrial matrix.</text>
</comment>
<comment type="catalytic activity">
    <reaction evidence="1">
        <text>4 Fe(II)-[cytochrome c] + O2 + 8 H(+)(in) = 4 Fe(III)-[cytochrome c] + 2 H2O + 4 H(+)(out)</text>
        <dbReference type="Rhea" id="RHEA:11436"/>
        <dbReference type="Rhea" id="RHEA-COMP:10350"/>
        <dbReference type="Rhea" id="RHEA-COMP:14399"/>
        <dbReference type="ChEBI" id="CHEBI:15377"/>
        <dbReference type="ChEBI" id="CHEBI:15378"/>
        <dbReference type="ChEBI" id="CHEBI:15379"/>
        <dbReference type="ChEBI" id="CHEBI:29033"/>
        <dbReference type="ChEBI" id="CHEBI:29034"/>
        <dbReference type="EC" id="7.1.1.9"/>
    </reaction>
    <physiologicalReaction direction="left-to-right" evidence="1">
        <dbReference type="Rhea" id="RHEA:11437"/>
    </physiologicalReaction>
</comment>
<comment type="cofactor">
    <cofactor evidence="1">
        <name>Cu cation</name>
        <dbReference type="ChEBI" id="CHEBI:23378"/>
    </cofactor>
    <text evidence="1">Binds a dinuclear copper A center per subunit.</text>
</comment>
<comment type="subunit">
    <text evidence="1">Component of the cytochrome c oxidase (complex IV, CIV), a multisubunit enzyme composed of a catalytic core of 3 subunits and several supernumerary subunits. The complex exists as a monomer or a dimer and forms supercomplexes (SCs) in the inner mitochondrial membrane with ubiquinol-cytochrome c oxidoreductase (cytochrome b-c1 complex, complex III, CIII).</text>
</comment>
<comment type="subcellular location">
    <subcellularLocation>
        <location evidence="1">Mitochondrion inner membrane</location>
        <topology evidence="1">Multi-pass membrane protein</topology>
    </subcellularLocation>
</comment>
<comment type="similarity">
    <text evidence="3">Belongs to the cytochrome c oxidase subunit 2 family.</text>
</comment>
<feature type="chain" id="PRO_0000183664" description="Cytochrome c oxidase subunit 2">
    <location>
        <begin position="1"/>
        <end position="243"/>
    </location>
</feature>
<feature type="topological domain" description="Mitochondrial intermembrane" evidence="2">
    <location>
        <begin position="1"/>
        <end position="34"/>
    </location>
</feature>
<feature type="transmembrane region" description="Helical" evidence="2">
    <location>
        <begin position="35"/>
        <end position="55"/>
    </location>
</feature>
<feature type="topological domain" description="Mitochondrial matrix" evidence="2">
    <location>
        <begin position="56"/>
        <end position="74"/>
    </location>
</feature>
<feature type="transmembrane region" description="Helical" evidence="2">
    <location>
        <begin position="75"/>
        <end position="97"/>
    </location>
</feature>
<feature type="topological domain" description="Mitochondrial intermembrane" evidence="2">
    <location>
        <begin position="98"/>
        <end position="243"/>
    </location>
</feature>
<feature type="binding site" evidence="1">
    <location>
        <position position="178"/>
    </location>
    <ligand>
        <name>Cu cation</name>
        <dbReference type="ChEBI" id="CHEBI:23378"/>
        <label>A1</label>
    </ligand>
</feature>
<feature type="binding site" evidence="1">
    <location>
        <position position="213"/>
    </location>
    <ligand>
        <name>Cu cation</name>
        <dbReference type="ChEBI" id="CHEBI:23378"/>
        <label>A1</label>
    </ligand>
</feature>
<feature type="binding site" evidence="1">
    <location>
        <position position="213"/>
    </location>
    <ligand>
        <name>Cu cation</name>
        <dbReference type="ChEBI" id="CHEBI:23378"/>
        <label>A2</label>
    </ligand>
</feature>
<feature type="binding site" evidence="1">
    <location>
        <position position="215"/>
    </location>
    <ligand>
        <name>Cu cation</name>
        <dbReference type="ChEBI" id="CHEBI:23378"/>
        <label>A2</label>
    </ligand>
</feature>
<feature type="binding site" evidence="1">
    <location>
        <position position="215"/>
    </location>
    <ligand>
        <name>Mg(2+)</name>
        <dbReference type="ChEBI" id="CHEBI:18420"/>
        <note>ligand shared with subunit 1</note>
    </ligand>
</feature>
<feature type="binding site" evidence="1">
    <location>
        <position position="217"/>
    </location>
    <ligand>
        <name>Cu cation</name>
        <dbReference type="ChEBI" id="CHEBI:23378"/>
        <label>A1</label>
    </ligand>
</feature>
<feature type="binding site" evidence="1">
    <location>
        <position position="217"/>
    </location>
    <ligand>
        <name>Cu cation</name>
        <dbReference type="ChEBI" id="CHEBI:23378"/>
        <label>A2</label>
    </ligand>
</feature>
<feature type="binding site" evidence="1">
    <location>
        <position position="221"/>
    </location>
    <ligand>
        <name>Cu cation</name>
        <dbReference type="ChEBI" id="CHEBI:23378"/>
        <label>A2</label>
    </ligand>
</feature>
<feature type="binding site" evidence="1">
    <location>
        <position position="224"/>
    </location>
    <ligand>
        <name>Cu cation</name>
        <dbReference type="ChEBI" id="CHEBI:23378"/>
        <label>A1</label>
    </ligand>
</feature>
<geneLocation type="mitochondrion"/>
<keyword id="KW-0186">Copper</keyword>
<keyword id="KW-0249">Electron transport</keyword>
<keyword id="KW-0460">Magnesium</keyword>
<keyword id="KW-0472">Membrane</keyword>
<keyword id="KW-0479">Metal-binding</keyword>
<keyword id="KW-0496">Mitochondrion</keyword>
<keyword id="KW-0999">Mitochondrion inner membrane</keyword>
<keyword id="KW-0679">Respiratory chain</keyword>
<keyword id="KW-1278">Translocase</keyword>
<keyword id="KW-0812">Transmembrane</keyword>
<keyword id="KW-1133">Transmembrane helix</keyword>
<keyword id="KW-0813">Transport</keyword>
<sequence>MNNIIHNDAPTPWGIYFQDGASPVYDGIVELHDQVLFYLLIVLVGVSWILFSTILRFRGSGIVHKYHNHSTTIEFVWTVSPALLLIAIAFPSFKLLYLMDEVIDPSITIKAIGHQWYWSYEYSDYTDKEGQSIEFDSYMLPTEDLEEGQLRQLEVDNRVLVPVNTPLRFIITATDVLHDFAVPSLGIKVDASPGRLNQVSTYVQREGVYYGQCSELCGVLHSSMPIVIEAVSLEKFLSWLDNQ</sequence>
<evidence type="ECO:0000250" key="1">
    <source>
        <dbReference type="UniProtKB" id="P00410"/>
    </source>
</evidence>
<evidence type="ECO:0000255" key="2"/>
<evidence type="ECO:0000305" key="3"/>
<organism>
    <name type="scientific">Pneumocystis carinii</name>
    <dbReference type="NCBI Taxonomy" id="4754"/>
    <lineage>
        <taxon>Eukaryota</taxon>
        <taxon>Fungi</taxon>
        <taxon>Dikarya</taxon>
        <taxon>Ascomycota</taxon>
        <taxon>Taphrinomycotina</taxon>
        <taxon>Pneumocystomycetes</taxon>
        <taxon>Pneumocystaceae</taxon>
        <taxon>Pneumocystis</taxon>
    </lineage>
</organism>
<proteinExistence type="inferred from homology"/>